<proteinExistence type="evidence at protein level"/>
<organism>
    <name type="scientific">Homo sapiens</name>
    <name type="common">Human</name>
    <dbReference type="NCBI Taxonomy" id="9606"/>
    <lineage>
        <taxon>Eukaryota</taxon>
        <taxon>Metazoa</taxon>
        <taxon>Chordata</taxon>
        <taxon>Craniata</taxon>
        <taxon>Vertebrata</taxon>
        <taxon>Euteleostomi</taxon>
        <taxon>Mammalia</taxon>
        <taxon>Eutheria</taxon>
        <taxon>Euarchontoglires</taxon>
        <taxon>Primates</taxon>
        <taxon>Haplorrhini</taxon>
        <taxon>Catarrhini</taxon>
        <taxon>Hominidae</taxon>
        <taxon>Homo</taxon>
    </lineage>
</organism>
<comment type="function">
    <text>May be involved in transcriptional regulation.</text>
</comment>
<comment type="interaction">
    <interactant intactId="EBI-2555749">
        <id>Q6P2D0</id>
    </interactant>
    <interactant intactId="EBI-3866279">
        <id>Q9BWT7</id>
        <label>CARD10</label>
    </interactant>
    <organismsDiffer>false</organismsDiffer>
    <experiments>3</experiments>
</comment>
<comment type="interaction">
    <interactant intactId="EBI-2555749">
        <id>Q6P2D0</id>
    </interactant>
    <interactant intactId="EBI-2559016">
        <id>Q6NZI2</id>
        <label>CAVIN1</label>
    </interactant>
    <organismsDiffer>false</organismsDiffer>
    <experiments>3</experiments>
</comment>
<comment type="interaction">
    <interactant intactId="EBI-2555749">
        <id>Q6P2D0</id>
    </interactant>
    <interactant intactId="EBI-11977221">
        <id>Q86Z20</id>
        <label>CCDC125</label>
    </interactant>
    <organismsDiffer>false</organismsDiffer>
    <experiments>3</experiments>
</comment>
<comment type="interaction">
    <interactant intactId="EBI-2555749">
        <id>Q6P2D0</id>
    </interactant>
    <interactant intactId="EBI-741885">
        <id>Q96LK0</id>
        <label>CEP19</label>
    </interactant>
    <organismsDiffer>false</organismsDiffer>
    <experiments>3</experiments>
</comment>
<comment type="interaction">
    <interactant intactId="EBI-2555749">
        <id>Q6P2D0</id>
    </interactant>
    <interactant intactId="EBI-739624">
        <id>Q8NHQ1</id>
        <label>CEP70</label>
    </interactant>
    <organismsDiffer>false</organismsDiffer>
    <experiments>3</experiments>
</comment>
<comment type="interaction">
    <interactant intactId="EBI-2555749">
        <id>Q6P2D0</id>
    </interactant>
    <interactant intactId="EBI-10292696">
        <id>Q96Q77</id>
        <label>CIB3</label>
    </interactant>
    <organismsDiffer>false</organismsDiffer>
    <experiments>3</experiments>
</comment>
<comment type="interaction">
    <interactant intactId="EBI-2555749">
        <id>Q6P2D0</id>
    </interactant>
    <interactant intactId="EBI-2872414">
        <id>Q8IUI8</id>
        <label>CRLF3</label>
    </interactant>
    <organismsDiffer>false</organismsDiffer>
    <experiments>3</experiments>
</comment>
<comment type="interaction">
    <interactant intactId="EBI-2555749">
        <id>Q6P2D0</id>
    </interactant>
    <interactant intactId="EBI-489887">
        <id>P50402</id>
        <label>EMD</label>
    </interactant>
    <organismsDiffer>false</organismsDiffer>
    <experiments>3</experiments>
</comment>
<comment type="interaction">
    <interactant intactId="EBI-2555749">
        <id>Q6P2D0</id>
    </interactant>
    <interactant intactId="EBI-5916454">
        <id>A6NEM1</id>
        <label>GOLGA6L9</label>
    </interactant>
    <organismsDiffer>false</organismsDiffer>
    <experiments>3</experiments>
</comment>
<comment type="interaction">
    <interactant intactId="EBI-2555749">
        <id>Q6P2D0</id>
    </interactant>
    <interactant intactId="EBI-712814">
        <id>P54257</id>
        <label>HAP1</label>
    </interactant>
    <organismsDiffer>false</organismsDiffer>
    <experiments>3</experiments>
</comment>
<comment type="interaction">
    <interactant intactId="EBI-2555749">
        <id>Q6P2D0</id>
    </interactant>
    <interactant intactId="EBI-10961706">
        <id>Q96ED9-2</id>
        <label>HOOK2</label>
    </interactant>
    <organismsDiffer>false</organismsDiffer>
    <experiments>3</experiments>
</comment>
<comment type="interaction">
    <interactant intactId="EBI-2555749">
        <id>Q6P2D0</id>
    </interactant>
    <interactant intactId="EBI-10171697">
        <id>Q6A162</id>
        <label>KRT40</label>
    </interactant>
    <organismsDiffer>false</organismsDiffer>
    <experiments>3</experiments>
</comment>
<comment type="interaction">
    <interactant intactId="EBI-2555749">
        <id>Q6P2D0</id>
    </interactant>
    <interactant intactId="EBI-740738">
        <id>O95751</id>
        <label>LDOC1</label>
    </interactant>
    <organismsDiffer>false</organismsDiffer>
    <experiments>3</experiments>
</comment>
<comment type="interaction">
    <interactant intactId="EBI-2555749">
        <id>Q6P2D0</id>
    </interactant>
    <interactant intactId="EBI-10255081">
        <id>Q9NYL2-2</id>
        <label>MAP3K20</label>
    </interactant>
    <organismsDiffer>false</organismsDiffer>
    <experiments>4</experiments>
</comment>
<comment type="interaction">
    <interactant intactId="EBI-2555749">
        <id>Q6P2D0</id>
    </interactant>
    <interactant intactId="EBI-1048159">
        <id>P55081</id>
        <label>MFAP1</label>
    </interactant>
    <organismsDiffer>false</organismsDiffer>
    <experiments>3</experiments>
</comment>
<comment type="interaction">
    <interactant intactId="EBI-2555749">
        <id>Q6P2D0</id>
    </interactant>
    <interactant intactId="EBI-11522433">
        <id>Q5JR59-3</id>
        <label>MTUS2</label>
    </interactant>
    <organismsDiffer>false</organismsDiffer>
    <experiments>3</experiments>
</comment>
<comment type="interaction">
    <interactant intactId="EBI-2555749">
        <id>Q6P2D0</id>
    </interactant>
    <interactant intactId="EBI-12029004">
        <id>P78424</id>
        <label>POU6F2</label>
    </interactant>
    <organismsDiffer>false</organismsDiffer>
    <experiments>3</experiments>
</comment>
<comment type="interaction">
    <interactant intactId="EBI-2555749">
        <id>Q6P2D0</id>
    </interactant>
    <interactant intactId="EBI-1644036">
        <id>Q86TI0</id>
        <label>TBC1D1</label>
    </interactant>
    <organismsDiffer>false</organismsDiffer>
    <experiments>3</experiments>
</comment>
<comment type="interaction">
    <interactant intactId="EBI-2555749">
        <id>Q6P2D0</id>
    </interactant>
    <interactant intactId="EBI-725997">
        <id>Q8WV44</id>
        <label>TRIM41</label>
    </interactant>
    <organismsDiffer>false</organismsDiffer>
    <experiments>3</experiments>
</comment>
<comment type="interaction">
    <interactant intactId="EBI-2555749">
        <id>Q6P2D0</id>
    </interactant>
    <interactant intactId="EBI-947459">
        <id>Q9H2G4</id>
        <label>TSPYL2</label>
    </interactant>
    <organismsDiffer>false</organismsDiffer>
    <experiments>3</experiments>
</comment>
<comment type="interaction">
    <interactant intactId="EBI-2555749">
        <id>Q6P2D0</id>
    </interactant>
    <interactant intactId="EBI-10177272">
        <id>P15622-3</id>
        <label>ZNF250</label>
    </interactant>
    <organismsDiffer>false</organismsDiffer>
    <experiments>3</experiments>
</comment>
<comment type="subcellular location">
    <subcellularLocation>
        <location evidence="1">Nucleus</location>
    </subcellularLocation>
    <text evidence="1">Shows widespread expression throughout the nucleus, but appears to be excluded from nucleoli.</text>
</comment>
<comment type="alternative products">
    <event type="alternative splicing"/>
    <isoform>
        <id>Q6P2D0-1</id>
        <name>1</name>
        <sequence type="displayed"/>
    </isoform>
    <isoform>
        <id>Q6P2D0-2</id>
        <name>2</name>
        <sequence type="described" ref="VSP_012682"/>
    </isoform>
</comment>
<comment type="similarity">
    <text evidence="5">Belongs to the krueppel C2H2-type zinc-finger protein family.</text>
</comment>
<comment type="sequence caution" evidence="5">
    <conflict type="erroneous initiation">
        <sequence resource="EMBL-CDS" id="AAH33774"/>
    </conflict>
</comment>
<dbReference type="EMBL" id="AK094761">
    <property type="protein sequence ID" value="BAC04417.1"/>
    <property type="molecule type" value="mRNA"/>
</dbReference>
<dbReference type="EMBL" id="AK291372">
    <property type="protein sequence ID" value="BAF84061.1"/>
    <property type="molecule type" value="mRNA"/>
</dbReference>
<dbReference type="EMBL" id="AK296560">
    <property type="protein sequence ID" value="BAG59181.1"/>
    <property type="molecule type" value="mRNA"/>
</dbReference>
<dbReference type="EMBL" id="CH471114">
    <property type="protein sequence ID" value="EAW95663.1"/>
    <property type="molecule type" value="Genomic_DNA"/>
</dbReference>
<dbReference type="EMBL" id="BC064604">
    <property type="protein sequence ID" value="AAH64604.1"/>
    <property type="molecule type" value="mRNA"/>
</dbReference>
<dbReference type="EMBL" id="BC033774">
    <property type="protein sequence ID" value="AAH33774.1"/>
    <property type="status" value="ALT_INIT"/>
    <property type="molecule type" value="mRNA"/>
</dbReference>
<dbReference type="CCDS" id="CCDS10914.2">
    <molecule id="Q6P2D0-1"/>
</dbReference>
<dbReference type="RefSeq" id="NP_001305398.1">
    <molecule id="Q6P2D0-1"/>
    <property type="nucleotide sequence ID" value="NM_001318469.2"/>
</dbReference>
<dbReference type="RefSeq" id="NP_001305400.1">
    <property type="nucleotide sequence ID" value="NM_001318471.1"/>
</dbReference>
<dbReference type="RefSeq" id="NP_001305401.1">
    <property type="nucleotide sequence ID" value="NM_001318472.1"/>
</dbReference>
<dbReference type="RefSeq" id="NP_001305402.1">
    <molecule id="Q6P2D0-2"/>
    <property type="nucleotide sequence ID" value="NM_001318473.2"/>
</dbReference>
<dbReference type="RefSeq" id="NP_001305403.1">
    <molecule id="Q6P2D0-2"/>
    <property type="nucleotide sequence ID" value="NM_001318474.2"/>
</dbReference>
<dbReference type="RefSeq" id="NP_001305404.1">
    <property type="nucleotide sequence ID" value="NM_001318475.1"/>
</dbReference>
<dbReference type="RefSeq" id="NP_001305405.1">
    <property type="nucleotide sequence ID" value="NM_001318476.1"/>
</dbReference>
<dbReference type="RefSeq" id="NP_710155.2">
    <molecule id="Q6P2D0-1"/>
    <property type="nucleotide sequence ID" value="NM_153688.4"/>
</dbReference>
<dbReference type="RefSeq" id="XP_016878473.1">
    <property type="nucleotide sequence ID" value="XM_017022984.1"/>
</dbReference>
<dbReference type="RefSeq" id="XP_016878474.1">
    <property type="nucleotide sequence ID" value="XM_017022985.1"/>
</dbReference>
<dbReference type="RefSeq" id="XP_016878476.1">
    <property type="nucleotide sequence ID" value="XM_017022987.1"/>
</dbReference>
<dbReference type="RefSeq" id="XP_047289625.1">
    <molecule id="Q6P2D0-1"/>
    <property type="nucleotide sequence ID" value="XM_047433669.1"/>
</dbReference>
<dbReference type="RefSeq" id="XP_054235684.1">
    <molecule id="Q6P2D0-1"/>
    <property type="nucleotide sequence ID" value="XM_054379709.1"/>
</dbReference>
<dbReference type="RefSeq" id="XP_054235685.1">
    <molecule id="Q6P2D0-1"/>
    <property type="nucleotide sequence ID" value="XM_054379710.1"/>
</dbReference>
<dbReference type="RefSeq" id="XP_054235686.1">
    <molecule id="Q6P2D0-2"/>
    <property type="nucleotide sequence ID" value="XM_054379711.1"/>
</dbReference>
<dbReference type="SMR" id="Q6P2D0"/>
<dbReference type="BioGRID" id="127811">
    <property type="interactions" value="47"/>
</dbReference>
<dbReference type="FunCoup" id="Q6P2D0">
    <property type="interactions" value="258"/>
</dbReference>
<dbReference type="IntAct" id="Q6P2D0">
    <property type="interactions" value="55"/>
</dbReference>
<dbReference type="STRING" id="9606.ENSP00000457044"/>
<dbReference type="iPTMnet" id="Q6P2D0"/>
<dbReference type="PhosphoSitePlus" id="Q6P2D0"/>
<dbReference type="BioMuta" id="ZFP1"/>
<dbReference type="DMDM" id="59802892"/>
<dbReference type="jPOST" id="Q6P2D0"/>
<dbReference type="MassIVE" id="Q6P2D0"/>
<dbReference type="PaxDb" id="9606-ENSP00000377080"/>
<dbReference type="PeptideAtlas" id="Q6P2D0"/>
<dbReference type="ProteomicsDB" id="66888">
    <molecule id="Q6P2D0-1"/>
</dbReference>
<dbReference type="ProteomicsDB" id="66889">
    <molecule id="Q6P2D0-2"/>
</dbReference>
<dbReference type="Pumba" id="Q6P2D0"/>
<dbReference type="Antibodypedia" id="16789">
    <property type="antibodies" value="62 antibodies from 14 providers"/>
</dbReference>
<dbReference type="DNASU" id="162239"/>
<dbReference type="Ensembl" id="ENST00000393430.6">
    <molecule id="Q6P2D0-1"/>
    <property type="protein sequence ID" value="ENSP00000377080.2"/>
    <property type="gene ID" value="ENSG00000184517.12"/>
</dbReference>
<dbReference type="Ensembl" id="ENST00000570010.6">
    <molecule id="Q6P2D0-1"/>
    <property type="protein sequence ID" value="ENSP00000457044.1"/>
    <property type="gene ID" value="ENSG00000184517.12"/>
</dbReference>
<dbReference type="GeneID" id="162239"/>
<dbReference type="KEGG" id="hsa:162239"/>
<dbReference type="MANE-Select" id="ENST00000570010.6">
    <property type="protein sequence ID" value="ENSP00000457044.1"/>
    <property type="RefSeq nucleotide sequence ID" value="NM_153688.4"/>
    <property type="RefSeq protein sequence ID" value="NP_710155.2"/>
</dbReference>
<dbReference type="UCSC" id="uc002fdo.4">
    <molecule id="Q6P2D0-1"/>
    <property type="organism name" value="human"/>
</dbReference>
<dbReference type="AGR" id="HGNC:23328"/>
<dbReference type="CTD" id="162239"/>
<dbReference type="DisGeNET" id="162239"/>
<dbReference type="GeneCards" id="ZFP1"/>
<dbReference type="HGNC" id="HGNC:23328">
    <property type="gene designation" value="ZFP1"/>
</dbReference>
<dbReference type="HPA" id="ENSG00000184517">
    <property type="expression patterns" value="Low tissue specificity"/>
</dbReference>
<dbReference type="MIM" id="617230">
    <property type="type" value="gene"/>
</dbReference>
<dbReference type="neXtProt" id="NX_Q6P2D0"/>
<dbReference type="OpenTargets" id="ENSG00000184517"/>
<dbReference type="PharmGKB" id="PA134882678"/>
<dbReference type="VEuPathDB" id="HostDB:ENSG00000184517"/>
<dbReference type="eggNOG" id="KOG1721">
    <property type="taxonomic scope" value="Eukaryota"/>
</dbReference>
<dbReference type="GeneTree" id="ENSGT00940000161694"/>
<dbReference type="HOGENOM" id="CLU_002678_0_2_1"/>
<dbReference type="InParanoid" id="Q6P2D0"/>
<dbReference type="OMA" id="DEYNGFG"/>
<dbReference type="OrthoDB" id="6077919at2759"/>
<dbReference type="PAN-GO" id="Q6P2D0">
    <property type="GO annotations" value="4 GO annotations based on evolutionary models"/>
</dbReference>
<dbReference type="PhylomeDB" id="Q6P2D0"/>
<dbReference type="TreeFam" id="TF336987"/>
<dbReference type="PathwayCommons" id="Q6P2D0"/>
<dbReference type="Reactome" id="R-HSA-212436">
    <property type="pathway name" value="Generic Transcription Pathway"/>
</dbReference>
<dbReference type="SignaLink" id="Q6P2D0"/>
<dbReference type="BioGRID-ORCS" id="162239">
    <property type="hits" value="56 hits in 1179 CRISPR screens"/>
</dbReference>
<dbReference type="ChiTaRS" id="ZFP1">
    <property type="organism name" value="human"/>
</dbReference>
<dbReference type="GenomeRNAi" id="162239"/>
<dbReference type="Pharos" id="Q6P2D0">
    <property type="development level" value="Tbio"/>
</dbReference>
<dbReference type="PRO" id="PR:Q6P2D0"/>
<dbReference type="Proteomes" id="UP000005640">
    <property type="component" value="Chromosome 16"/>
</dbReference>
<dbReference type="RNAct" id="Q6P2D0">
    <property type="molecule type" value="protein"/>
</dbReference>
<dbReference type="Bgee" id="ENSG00000184517">
    <property type="expression patterns" value="Expressed in cortical plate and 110 other cell types or tissues"/>
</dbReference>
<dbReference type="ExpressionAtlas" id="Q6P2D0">
    <property type="expression patterns" value="baseline and differential"/>
</dbReference>
<dbReference type="GO" id="GO:0005634">
    <property type="term" value="C:nucleus"/>
    <property type="evidence" value="ECO:0000318"/>
    <property type="project" value="GO_Central"/>
</dbReference>
<dbReference type="GO" id="GO:0000981">
    <property type="term" value="F:DNA-binding transcription factor activity, RNA polymerase II-specific"/>
    <property type="evidence" value="ECO:0000318"/>
    <property type="project" value="GO_Central"/>
</dbReference>
<dbReference type="GO" id="GO:0000978">
    <property type="term" value="F:RNA polymerase II cis-regulatory region sequence-specific DNA binding"/>
    <property type="evidence" value="ECO:0000318"/>
    <property type="project" value="GO_Central"/>
</dbReference>
<dbReference type="GO" id="GO:1990837">
    <property type="term" value="F:sequence-specific double-stranded DNA binding"/>
    <property type="evidence" value="ECO:0000314"/>
    <property type="project" value="ARUK-UCL"/>
</dbReference>
<dbReference type="GO" id="GO:0008270">
    <property type="term" value="F:zinc ion binding"/>
    <property type="evidence" value="ECO:0007669"/>
    <property type="project" value="UniProtKB-KW"/>
</dbReference>
<dbReference type="GO" id="GO:0006357">
    <property type="term" value="P:regulation of transcription by RNA polymerase II"/>
    <property type="evidence" value="ECO:0000318"/>
    <property type="project" value="GO_Central"/>
</dbReference>
<dbReference type="CDD" id="cd07765">
    <property type="entry name" value="KRAB_A-box"/>
    <property type="match status" value="1"/>
</dbReference>
<dbReference type="FunFam" id="3.30.160.60:FF:000555">
    <property type="entry name" value="Zinc finger protein 1 homolog"/>
    <property type="match status" value="1"/>
</dbReference>
<dbReference type="FunFam" id="3.30.160.60:FF:000907">
    <property type="entry name" value="Zinc finger protein 1 homolog"/>
    <property type="match status" value="1"/>
</dbReference>
<dbReference type="FunFam" id="3.30.160.60:FF:000139">
    <property type="entry name" value="zinc finger protein 1 homolog"/>
    <property type="match status" value="1"/>
</dbReference>
<dbReference type="FunFam" id="3.30.160.60:FF:000295">
    <property type="entry name" value="zinc finger protein 19"/>
    <property type="match status" value="2"/>
</dbReference>
<dbReference type="FunFam" id="3.30.160.60:FF:000688">
    <property type="entry name" value="zinc finger protein 197 isoform X1"/>
    <property type="match status" value="1"/>
</dbReference>
<dbReference type="FunFam" id="3.30.160.60:FF:002343">
    <property type="entry name" value="Zinc finger protein 33A"/>
    <property type="match status" value="1"/>
</dbReference>
<dbReference type="FunFam" id="3.30.160.60:FF:002090">
    <property type="entry name" value="Zinc finger protein 473"/>
    <property type="match status" value="1"/>
</dbReference>
<dbReference type="Gene3D" id="6.10.140.140">
    <property type="match status" value="1"/>
</dbReference>
<dbReference type="Gene3D" id="3.30.160.60">
    <property type="entry name" value="Classic Zinc Finger"/>
    <property type="match status" value="8"/>
</dbReference>
<dbReference type="InterPro" id="IPR001909">
    <property type="entry name" value="KRAB"/>
</dbReference>
<dbReference type="InterPro" id="IPR036051">
    <property type="entry name" value="KRAB_dom_sf"/>
</dbReference>
<dbReference type="InterPro" id="IPR036236">
    <property type="entry name" value="Znf_C2H2_sf"/>
</dbReference>
<dbReference type="InterPro" id="IPR013087">
    <property type="entry name" value="Znf_C2H2_type"/>
</dbReference>
<dbReference type="PANTHER" id="PTHR24381:SF455">
    <property type="entry name" value="RB-ASSOCIATED KRAB ZINC FINGER PROTEIN-RELATED"/>
    <property type="match status" value="1"/>
</dbReference>
<dbReference type="PANTHER" id="PTHR24381">
    <property type="entry name" value="ZINC FINGER PROTEIN"/>
    <property type="match status" value="1"/>
</dbReference>
<dbReference type="Pfam" id="PF01352">
    <property type="entry name" value="KRAB"/>
    <property type="match status" value="1"/>
</dbReference>
<dbReference type="Pfam" id="PF00096">
    <property type="entry name" value="zf-C2H2"/>
    <property type="match status" value="8"/>
</dbReference>
<dbReference type="SMART" id="SM00349">
    <property type="entry name" value="KRAB"/>
    <property type="match status" value="1"/>
</dbReference>
<dbReference type="SMART" id="SM00355">
    <property type="entry name" value="ZnF_C2H2"/>
    <property type="match status" value="8"/>
</dbReference>
<dbReference type="SUPFAM" id="SSF57667">
    <property type="entry name" value="beta-beta-alpha zinc fingers"/>
    <property type="match status" value="5"/>
</dbReference>
<dbReference type="SUPFAM" id="SSF109640">
    <property type="entry name" value="KRAB domain (Kruppel-associated box)"/>
    <property type="match status" value="1"/>
</dbReference>
<dbReference type="PROSITE" id="PS50805">
    <property type="entry name" value="KRAB"/>
    <property type="match status" value="1"/>
</dbReference>
<dbReference type="PROSITE" id="PS00028">
    <property type="entry name" value="ZINC_FINGER_C2H2_1"/>
    <property type="match status" value="8"/>
</dbReference>
<dbReference type="PROSITE" id="PS50157">
    <property type="entry name" value="ZINC_FINGER_C2H2_2"/>
    <property type="match status" value="8"/>
</dbReference>
<accession>Q6P2D0</accession>
<accession>A8K5Q7</accession>
<accession>B4DKG9</accession>
<accession>Q8N188</accession>
<accession>Q8N9F9</accession>
<keyword id="KW-0025">Alternative splicing</keyword>
<keyword id="KW-0238">DNA-binding</keyword>
<keyword id="KW-1017">Isopeptide bond</keyword>
<keyword id="KW-0479">Metal-binding</keyword>
<keyword id="KW-0539">Nucleus</keyword>
<keyword id="KW-1267">Proteomics identification</keyword>
<keyword id="KW-1185">Reference proteome</keyword>
<keyword id="KW-0677">Repeat</keyword>
<keyword id="KW-0804">Transcription</keyword>
<keyword id="KW-0805">Transcription regulation</keyword>
<keyword id="KW-0832">Ubl conjugation</keyword>
<keyword id="KW-0862">Zinc</keyword>
<keyword id="KW-0863">Zinc-finger</keyword>
<name>ZFP1_HUMAN</name>
<reference key="1">
    <citation type="journal article" date="2004" name="Nat. Genet.">
        <title>Complete sequencing and characterization of 21,243 full-length human cDNAs.</title>
        <authorList>
            <person name="Ota T."/>
            <person name="Suzuki Y."/>
            <person name="Nishikawa T."/>
            <person name="Otsuki T."/>
            <person name="Sugiyama T."/>
            <person name="Irie R."/>
            <person name="Wakamatsu A."/>
            <person name="Hayashi K."/>
            <person name="Sato H."/>
            <person name="Nagai K."/>
            <person name="Kimura K."/>
            <person name="Makita H."/>
            <person name="Sekine M."/>
            <person name="Obayashi M."/>
            <person name="Nishi T."/>
            <person name="Shibahara T."/>
            <person name="Tanaka T."/>
            <person name="Ishii S."/>
            <person name="Yamamoto J."/>
            <person name="Saito K."/>
            <person name="Kawai Y."/>
            <person name="Isono Y."/>
            <person name="Nakamura Y."/>
            <person name="Nagahari K."/>
            <person name="Murakami K."/>
            <person name="Yasuda T."/>
            <person name="Iwayanagi T."/>
            <person name="Wagatsuma M."/>
            <person name="Shiratori A."/>
            <person name="Sudo H."/>
            <person name="Hosoiri T."/>
            <person name="Kaku Y."/>
            <person name="Kodaira H."/>
            <person name="Kondo H."/>
            <person name="Sugawara M."/>
            <person name="Takahashi M."/>
            <person name="Kanda K."/>
            <person name="Yokoi T."/>
            <person name="Furuya T."/>
            <person name="Kikkawa E."/>
            <person name="Omura Y."/>
            <person name="Abe K."/>
            <person name="Kamihara K."/>
            <person name="Katsuta N."/>
            <person name="Sato K."/>
            <person name="Tanikawa M."/>
            <person name="Yamazaki M."/>
            <person name="Ninomiya K."/>
            <person name="Ishibashi T."/>
            <person name="Yamashita H."/>
            <person name="Murakawa K."/>
            <person name="Fujimori K."/>
            <person name="Tanai H."/>
            <person name="Kimata M."/>
            <person name="Watanabe M."/>
            <person name="Hiraoka S."/>
            <person name="Chiba Y."/>
            <person name="Ishida S."/>
            <person name="Ono Y."/>
            <person name="Takiguchi S."/>
            <person name="Watanabe S."/>
            <person name="Yosida M."/>
            <person name="Hotuta T."/>
            <person name="Kusano J."/>
            <person name="Kanehori K."/>
            <person name="Takahashi-Fujii A."/>
            <person name="Hara H."/>
            <person name="Tanase T.-O."/>
            <person name="Nomura Y."/>
            <person name="Togiya S."/>
            <person name="Komai F."/>
            <person name="Hara R."/>
            <person name="Takeuchi K."/>
            <person name="Arita M."/>
            <person name="Imose N."/>
            <person name="Musashino K."/>
            <person name="Yuuki H."/>
            <person name="Oshima A."/>
            <person name="Sasaki N."/>
            <person name="Aotsuka S."/>
            <person name="Yoshikawa Y."/>
            <person name="Matsunawa H."/>
            <person name="Ichihara T."/>
            <person name="Shiohata N."/>
            <person name="Sano S."/>
            <person name="Moriya S."/>
            <person name="Momiyama H."/>
            <person name="Satoh N."/>
            <person name="Takami S."/>
            <person name="Terashima Y."/>
            <person name="Suzuki O."/>
            <person name="Nakagawa S."/>
            <person name="Senoh A."/>
            <person name="Mizoguchi H."/>
            <person name="Goto Y."/>
            <person name="Shimizu F."/>
            <person name="Wakebe H."/>
            <person name="Hishigaki H."/>
            <person name="Watanabe T."/>
            <person name="Sugiyama A."/>
            <person name="Takemoto M."/>
            <person name="Kawakami B."/>
            <person name="Yamazaki M."/>
            <person name="Watanabe K."/>
            <person name="Kumagai A."/>
            <person name="Itakura S."/>
            <person name="Fukuzumi Y."/>
            <person name="Fujimori Y."/>
            <person name="Komiyama M."/>
            <person name="Tashiro H."/>
            <person name="Tanigami A."/>
            <person name="Fujiwara T."/>
            <person name="Ono T."/>
            <person name="Yamada K."/>
            <person name="Fujii Y."/>
            <person name="Ozaki K."/>
            <person name="Hirao M."/>
            <person name="Ohmori Y."/>
            <person name="Kawabata A."/>
            <person name="Hikiji T."/>
            <person name="Kobatake N."/>
            <person name="Inagaki H."/>
            <person name="Ikema Y."/>
            <person name="Okamoto S."/>
            <person name="Okitani R."/>
            <person name="Kawakami T."/>
            <person name="Noguchi S."/>
            <person name="Itoh T."/>
            <person name="Shigeta K."/>
            <person name="Senba T."/>
            <person name="Matsumura K."/>
            <person name="Nakajima Y."/>
            <person name="Mizuno T."/>
            <person name="Morinaga M."/>
            <person name="Sasaki M."/>
            <person name="Togashi T."/>
            <person name="Oyama M."/>
            <person name="Hata H."/>
            <person name="Watanabe M."/>
            <person name="Komatsu T."/>
            <person name="Mizushima-Sugano J."/>
            <person name="Satoh T."/>
            <person name="Shirai Y."/>
            <person name="Takahashi Y."/>
            <person name="Nakagawa K."/>
            <person name="Okumura K."/>
            <person name="Nagase T."/>
            <person name="Nomura N."/>
            <person name="Kikuchi H."/>
            <person name="Masuho Y."/>
            <person name="Yamashita R."/>
            <person name="Nakai K."/>
            <person name="Yada T."/>
            <person name="Nakamura Y."/>
            <person name="Ohara O."/>
            <person name="Isogai T."/>
            <person name="Sugano S."/>
        </authorList>
    </citation>
    <scope>NUCLEOTIDE SEQUENCE [LARGE SCALE MRNA] (ISOFORMS 1 AND 2)</scope>
    <source>
        <tissue>Brain</tissue>
        <tissue>Thalamus</tissue>
    </source>
</reference>
<reference key="2">
    <citation type="submission" date="2005-09" db="EMBL/GenBank/DDBJ databases">
        <authorList>
            <person name="Mural R.J."/>
            <person name="Istrail S."/>
            <person name="Sutton G.G."/>
            <person name="Florea L."/>
            <person name="Halpern A.L."/>
            <person name="Mobarry C.M."/>
            <person name="Lippert R."/>
            <person name="Walenz B."/>
            <person name="Shatkay H."/>
            <person name="Dew I."/>
            <person name="Miller J.R."/>
            <person name="Flanigan M.J."/>
            <person name="Edwards N.J."/>
            <person name="Bolanos R."/>
            <person name="Fasulo D."/>
            <person name="Halldorsson B.V."/>
            <person name="Hannenhalli S."/>
            <person name="Turner R."/>
            <person name="Yooseph S."/>
            <person name="Lu F."/>
            <person name="Nusskern D.R."/>
            <person name="Shue B.C."/>
            <person name="Zheng X.H."/>
            <person name="Zhong F."/>
            <person name="Delcher A.L."/>
            <person name="Huson D.H."/>
            <person name="Kravitz S.A."/>
            <person name="Mouchard L."/>
            <person name="Reinert K."/>
            <person name="Remington K.A."/>
            <person name="Clark A.G."/>
            <person name="Waterman M.S."/>
            <person name="Eichler E.E."/>
            <person name="Adams M.D."/>
            <person name="Hunkapiller M.W."/>
            <person name="Myers E.W."/>
            <person name="Venter J.C."/>
        </authorList>
    </citation>
    <scope>NUCLEOTIDE SEQUENCE [LARGE SCALE GENOMIC DNA]</scope>
</reference>
<reference key="3">
    <citation type="journal article" date="2004" name="Genome Res.">
        <title>The status, quality, and expansion of the NIH full-length cDNA project: the Mammalian Gene Collection (MGC).</title>
        <authorList>
            <consortium name="The MGC Project Team"/>
        </authorList>
    </citation>
    <scope>NUCLEOTIDE SEQUENCE [LARGE SCALE MRNA] (ISOFORM 1)</scope>
    <source>
        <tissue>Uterus</tissue>
    </source>
</reference>
<reference key="4">
    <citation type="journal article" date="2014" name="Nat. Struct. Mol. Biol.">
        <title>Uncovering global SUMOylation signaling networks in a site-specific manner.</title>
        <authorList>
            <person name="Hendriks I.A."/>
            <person name="D'Souza R.C."/>
            <person name="Yang B."/>
            <person name="Verlaan-de Vries M."/>
            <person name="Mann M."/>
            <person name="Vertegaal A.C."/>
        </authorList>
    </citation>
    <scope>SUMOYLATION [LARGE SCALE ANALYSIS] AT LYS-114 AND LYS-145</scope>
    <scope>IDENTIFICATION BY MASS SPECTROMETRY [LARGE SCALE ANALYSIS]</scope>
</reference>
<reference key="5">
    <citation type="journal article" date="2015" name="Cell Rep.">
        <title>SUMO-2 orchestrates chromatin modifiers in response to DNA damage.</title>
        <authorList>
            <person name="Hendriks I.A."/>
            <person name="Treffers L.W."/>
            <person name="Verlaan-de Vries M."/>
            <person name="Olsen J.V."/>
            <person name="Vertegaal A.C."/>
        </authorList>
    </citation>
    <scope>SUMOYLATION [LARGE SCALE ANALYSIS] AT LYS-145</scope>
    <scope>IDENTIFICATION BY MASS SPECTROMETRY [LARGE SCALE ANALYSIS]</scope>
</reference>
<reference key="6">
    <citation type="journal article" date="2015" name="Mol. Cell. Proteomics">
        <title>System-wide analysis of SUMOylation dynamics in response to replication stress reveals novel small ubiquitin-like modified target proteins and acceptor lysines relevant for genome stability.</title>
        <authorList>
            <person name="Xiao Z."/>
            <person name="Chang J.G."/>
            <person name="Hendriks I.A."/>
            <person name="Sigurdsson J.O."/>
            <person name="Olsen J.V."/>
            <person name="Vertegaal A.C."/>
        </authorList>
    </citation>
    <scope>SUMOYLATION [LARGE SCALE ANALYSIS] AT LYS-145</scope>
    <scope>IDENTIFICATION BY MASS SPECTROMETRY [LARGE SCALE ANALYSIS]</scope>
</reference>
<reference key="7">
    <citation type="journal article" date="2017" name="Nat. Struct. Mol. Biol.">
        <title>Site-specific mapping of the human SUMO proteome reveals co-modification with phosphorylation.</title>
        <authorList>
            <person name="Hendriks I.A."/>
            <person name="Lyon D."/>
            <person name="Young C."/>
            <person name="Jensen L.J."/>
            <person name="Vertegaal A.C."/>
            <person name="Nielsen M.L."/>
        </authorList>
    </citation>
    <scope>SUMOYLATION [LARGE SCALE ANALYSIS] AT LYS-74; LYS-114 AND LYS-145</scope>
    <scope>IDENTIFICATION BY MASS SPECTROMETRY [LARGE SCALE ANALYSIS]</scope>
</reference>
<gene>
    <name type="primary">ZFP1</name>
    <name type="synonym">ZNF475</name>
</gene>
<sequence>MNKSQGSVSFTDVTVDFTQEEWEQLDPSQRILYMDVMLENYSNLLSVEVWKADDQMERDHRNPDEQARQFLILKNQTPIEERGDLFGKALNLNTDFVSLRQVPYKYDLYEKTLKYNSDLLNSNRSYAGKQTDECNEFGKALLYLKQEKTHSGVEYSEYNKSGKALSHKAAIFKHQKIKNLVQPFICTYCDKAFSFKSLLISHKRIHTGEKPYECNVCKKTFSHKANLIKHQRIHTGEKPFECPECGKAFTHQSNLIVHQRAHMEKKPYECSECGKTFAQKFELTTHQRIHTGERPYECNECAKTFFKKSNLIIHQKIHTGEKRYECSECGKSFIQNSQLIIHMRTHTGEKPYECTECGKTFSQRSTLRLHLRIHTGEKPYECSECGKAFSRKSRLSVHQRVHIGEKP</sequence>
<protein>
    <recommendedName>
        <fullName>Zinc finger protein 1 homolog</fullName>
        <shortName>Zfp-1</shortName>
    </recommendedName>
    <alternativeName>
        <fullName>Zinc finger protein 475</fullName>
    </alternativeName>
</protein>
<evidence type="ECO:0000250" key="1">
    <source>
        <dbReference type="UniProtKB" id="P08042"/>
    </source>
</evidence>
<evidence type="ECO:0000255" key="2">
    <source>
        <dbReference type="PROSITE-ProRule" id="PRU00042"/>
    </source>
</evidence>
<evidence type="ECO:0000255" key="3">
    <source>
        <dbReference type="PROSITE-ProRule" id="PRU00119"/>
    </source>
</evidence>
<evidence type="ECO:0000303" key="4">
    <source>
    </source>
</evidence>
<evidence type="ECO:0000305" key="5"/>
<evidence type="ECO:0007744" key="6">
    <source>
    </source>
</evidence>
<evidence type="ECO:0007744" key="7">
    <source>
    </source>
</evidence>
<evidence type="ECO:0007744" key="8">
    <source>
    </source>
</evidence>
<evidence type="ECO:0007744" key="9">
    <source>
    </source>
</evidence>
<feature type="chain" id="PRO_0000047279" description="Zinc finger protein 1 homolog">
    <location>
        <begin position="1"/>
        <end position="407"/>
    </location>
</feature>
<feature type="domain" description="KRAB" evidence="3">
    <location>
        <begin position="8"/>
        <end position="83"/>
    </location>
</feature>
<feature type="zinc finger region" description="C2H2-type 1" evidence="2">
    <location>
        <begin position="184"/>
        <end position="206"/>
    </location>
</feature>
<feature type="zinc finger region" description="C2H2-type 2" evidence="2">
    <location>
        <begin position="212"/>
        <end position="234"/>
    </location>
</feature>
<feature type="zinc finger region" description="C2H2-type 3" evidence="2">
    <location>
        <begin position="240"/>
        <end position="262"/>
    </location>
</feature>
<feature type="zinc finger region" description="C2H2-type 4" evidence="2">
    <location>
        <begin position="268"/>
        <end position="290"/>
    </location>
</feature>
<feature type="zinc finger region" description="C2H2-type 5" evidence="2">
    <location>
        <begin position="296"/>
        <end position="318"/>
    </location>
</feature>
<feature type="zinc finger region" description="C2H2-type 6" evidence="2">
    <location>
        <begin position="324"/>
        <end position="346"/>
    </location>
</feature>
<feature type="zinc finger region" description="C2H2-type 7" evidence="2">
    <location>
        <begin position="352"/>
        <end position="374"/>
    </location>
</feature>
<feature type="zinc finger region" description="C2H2-type 8" evidence="2">
    <location>
        <begin position="380"/>
        <end position="402"/>
    </location>
</feature>
<feature type="region of interest" description="Required for correct nuclear localization and exclusion from the nucleoli" evidence="1">
    <location>
        <begin position="2"/>
        <end position="167"/>
    </location>
</feature>
<feature type="region of interest" description="Does not affect nuclear localization pattern" evidence="1">
    <location>
        <begin position="171"/>
        <end position="404"/>
    </location>
</feature>
<feature type="cross-link" description="Glycyl lysine isopeptide (Lys-Gly) (interchain with G-Cter in SUMO2)" evidence="9">
    <location>
        <position position="74"/>
    </location>
</feature>
<feature type="cross-link" description="Glycyl lysine isopeptide (Lys-Gly) (interchain with G-Cter in SUMO2)" evidence="6 9">
    <location>
        <position position="114"/>
    </location>
</feature>
<feature type="cross-link" description="Glycyl lysine isopeptide (Lys-Gly) (interchain with G-Cter in SUMO2)" evidence="6 7 8 9">
    <location>
        <position position="145"/>
    </location>
</feature>
<feature type="splice variant" id="VSP_012682" description="In isoform 2." evidence="4">
    <location>
        <begin position="1"/>
        <end position="55"/>
    </location>
</feature>